<keyword id="KW-0002">3D-structure</keyword>
<keyword id="KW-0010">Activator</keyword>
<keyword id="KW-0025">Alternative splicing</keyword>
<keyword id="KW-0963">Cytoplasm</keyword>
<keyword id="KW-0217">Developmental protein</keyword>
<keyword id="KW-0238">DNA-binding</keyword>
<keyword id="KW-0496">Mitochondrion</keyword>
<keyword id="KW-0539">Nucleus</keyword>
<keyword id="KW-0597">Phosphoprotein</keyword>
<keyword id="KW-1185">Reference proteome</keyword>
<keyword id="KW-0346">Stress response</keyword>
<keyword id="KW-0804">Transcription</keyword>
<keyword id="KW-0805">Transcription regulation</keyword>
<keyword id="KW-0810">Translation regulation</keyword>
<comment type="function">
    <text evidence="3 4 6 7 8 9 10 11 12 13">Transcription factor (PubMed:1547503, PubMed:28600327). Required to specify the fate of ventral blastomeres in the early embryo, and postembryonically for the development of the intestine (PubMed:1547503). Directly regulates expression of zygotically expressed med-1 and med-2 to direct mesendoderm development (PubMed:11463373, PubMed:1547503). In response to oxidative stress and anoxia, required to up-regulate expression of stl-1 mRNA (PubMed:24385935). Involved in regulating innate immunity, acting downstream of the pmk-1 p38/MAPK pathway and probably also downstream of nipi-3 (PubMed:34407394). Required for the up-regulation of phase II detoxification genes, including gcs-1 and several glutathione-S-transferase mRNAs in response to oxidative stress generated during pathogenic bacterial infection (PubMed:22216003). Modulates oxidative stress responses in concert with transcription factors such as hcf-1 and elt-3 (PubMed:22568582, PubMed:28600327). Regulates the transcription of genes associated with metabolism in response to changes in nutrient availability (PubMed:23040073). In neurons, involved in mitochondrial fusion and behavioral recovery during reoxygenation (PubMed:24385935). Required for riok-1 mRNA expression in the intestine (PubMed:25688864). Downstream of the let-60/Ras, mek-2 and pmk-1 pathway, positively regulates lifespan probably by preventing transcription of insulin-like peptides such as ins-39 (PubMed:20624915). Prevents degeneration of dopaminergic CEP neurons in response to high Al(3+) or Mn(2+) levels, probably by promoting the expression of glutathione-S-transferase gst-1 (PubMed:23106139, PubMed:23721876).</text>
</comment>
<comment type="function">
    <molecule>Isoform a</molecule>
    <text evidence="15">Directed by the ER-associated degradation pathway (ERAD), mediates proteasomal homeostasis by regulating the expression of proteasomal subunits such as rpt-3 to confer resistance to proteasomal dysfunction.</text>
</comment>
<comment type="subunit">
    <text evidence="16 18">Monomer (PubMed:7939715). Interacts with GATA factor elt-3; interaction may enhance transcriptional activation of target genes (PubMed:28600327).</text>
</comment>
<comment type="subunit">
    <molecule>Isoform a</molecule>
    <text evidence="9">Interacts with pgma-5 (PubMed:23040073). Interacts with transcription factor mxl-3 (via N-terminus) (PubMed:23040073).</text>
</comment>
<comment type="subunit">
    <molecule>Isoform c</molecule>
    <text evidence="9">Interacts with pgma-5 (PubMed:23040073). Interacts with transcription factor mxl-3 (via N-terminus) (PubMed:23040073).</text>
</comment>
<comment type="subcellular location">
    <subcellularLocation>
        <location evidence="5 7 14 18">Nucleus</location>
    </subcellularLocation>
    <subcellularLocation>
        <location evidence="5 7 14">Cytoplasm</location>
    </subcellularLocation>
    <text evidence="5 7 8 14">In absence of stress, localizes in the cytoplasm of intestinal cells (PubMed:16166371, PubMed:22216003, PubMed:26920757). Upon paraquat or arsenite treatments or upon bacterial infection, localizes in the nucleus (PubMed:16166371, PubMed:22216003, PubMed:26920757). Nuclear localization is regulated by pmk-1-mediated phosphorylation (PubMed:16166371, PubMed:26920757). Nuclear localization is regulated by transcriptional coregulator hcf-1.</text>
</comment>
<comment type="subcellular location">
    <molecule>Isoform a</molecule>
    <subcellularLocation>
        <location evidence="15">Nucleus</location>
    </subcellularLocation>
    <subcellularLocation>
        <location evidence="9">Mitochondrion</location>
    </subcellularLocation>
    <text evidence="15">Localizes to the nucleus in response to proteasomal dysfunction.</text>
</comment>
<comment type="subcellular location">
    <molecule>Isoform b</molecule>
    <subcellularLocation>
        <location evidence="16 17">Nucleus</location>
    </subcellularLocation>
    <text evidence="16 17">Localizes to the nucleus in response to pathogenic bacteria such as P.aeruginosa or E.faecalis, in a nipi-3-dependent manner (PubMed:34407394). Localizes to the nucleus in a brap-2-dependent manner (PubMed:28600327).</text>
</comment>
<comment type="subcellular location">
    <molecule>Isoform c</molecule>
    <subcellularLocation>
        <location evidence="16 17">Nucleus</location>
    </subcellularLocation>
    <text evidence="16 17">Localizes to the nucleus in response to pathogenic bacteria such as P.aeruginosa or E.faecalis, in a nipi-3-dependent manner (PubMed:34407394). Localizes to the nucleus in a brap-2-dependent manner (PubMed:28600327).</text>
</comment>
<comment type="alternative products">
    <event type="alternative splicing"/>
    <isoform>
        <id>P34707-1</id>
        <name>a</name>
        <sequence type="displayed"/>
    </isoform>
    <isoform>
        <id>P34707-2</id>
        <name>b</name>
        <sequence type="described" ref="VSP_011488 VSP_011489"/>
    </isoform>
    <isoform>
        <id>P34707-3</id>
        <name>c</name>
        <sequence type="described" ref="VSP_011487"/>
    </isoform>
</comment>
<comment type="tissue specificity">
    <text evidence="4 14">Postembryonic intestinal cells.</text>
</comment>
<comment type="developmental stage">
    <text evidence="4">Expressed both maternally and zygotically.</text>
</comment>
<comment type="domain">
    <text evidence="19">Alternative DNA-binding strategy due to lack of a leucine zipper dimerization segment: DNA binding domain binds to its cognate half-site, an N-terminal arm recognizes adjacent 5' AT-rich sequences in the minor groove and the intervening residues stabilize interactions of these two subdomains with DNA.</text>
</comment>
<comment type="PTM">
    <molecule>Isoform a</molecule>
    <text evidence="15">Cleaved by the aspartic protease ddi-1.</text>
</comment>
<comment type="disruption phenotype">
    <text evidence="7">RNAi-mediated knockdown of all isoforms results in a severe reduction in transcription of gst-4, gst-5, gst-7 and gcs-1 mRNAs during infection by P.aeruginosa or P.faecalis (PubMed:22216003). Susceptibility to P.aeruginosa and P.faecalis is characterized by a decrease in survival rate (PubMed:22216003).</text>
</comment>
<comment type="disruption phenotype">
    <molecule>Isoform a</molecule>
    <text evidence="6 7 10 11 13 15">Viable, but there is failed activation of the expression of the proteasomal subunit rpt-3 in all tissues (PubMed:27528192). Treatment with the proteasome inhibitor bortezomib or knockout with rpn-10 RNAi results in larval lethality (PubMed:27528192). Double knockout with pbs-5 results in failed expression the proteasomal subunit rpt-3 (PubMed:27528192). Also causes a loss of transcription of riok-1 mRNA in intestine (PubMed:25688864). Reduces life span (PubMed:20624915). Moderate increase in transcription of ins-39 mRNA (PubMed:20624915). Moderate increase in CEP neuron death in response to high Al(3+) levels (PubMed:23106139). RNAi-mediated knockdown causes an increase in Mn(2+)-mediated dopaminergic CEP neuron degeneration and a reduction in expression levels of glutathione S-transferase gst-1 (PubMed:23721876).</text>
</comment>
<comment type="disruption phenotype">
    <molecule>Isoform c</molecule>
    <text evidence="16">RNAi-mediated knockdown decreases gst-4 mRNA expression in a brap-2 mutant background.</text>
</comment>
<comment type="similarity">
    <text evidence="20">Belongs to the bZIP family. Skn1 subfamily.</text>
</comment>
<sequence length="623" mass="70709">MGGSSRRQRSTSATRRDDKRRRRQCFSSVADDEEETTSIYGVSSIFIWILATSSLILVISSPSSNTSIQSSSYDRITTKHLLDNISPTFKMYTDSNNRNFDEVNHQHQQEQDFNGQSKYDYPQFNRPMGLRWRDDQRMMEYFMSNGPVETVPVMPILTEHPPASPFGRGPSTERPTTSSRYEYSSPSLEDIDLIDVLWRSDIAGEKGTRQVAPADQYECDLQTLTEKSTVAPLTAEENARYEDLSKGFYNGFFESFNNNQYQQKHQQQQREQIKTPTLEHPTQKAELEDDLFDEDLAQLFEDVSREEGQLNQLFDNKQQHPVINNVSLSEGIVYNQANLTEMQEMRDSCNQVSISTIPTTSTAQPETLFNVTDSQTVEQWLPTEVVPNDVFPTSNYAYIGMQNDSLQAVVSNGQIDYDHSYQSTGQTPLSPLIIGSSGRQQQTQTSPGSVTVTATATQSLFDPYHSQRHSFSDCTTDSSSTCSRLSSESPRYTSESSTGTHESRFYGKLAPSSGSRYQRSSSPRSSQSSIKIARVVPLASGQRKRGRQSKDEQLASDNELPVSAFQISEMSLSELQQVLKNESLSEYQRQLIRKIRRRGKNKVAARTCRQRRTDRHDKMSHYI</sequence>
<dbReference type="EMBL" id="BX284604">
    <property type="protein sequence ID" value="CCD62212.1"/>
    <property type="molecule type" value="Genomic_DNA"/>
</dbReference>
<dbReference type="EMBL" id="BX284604">
    <property type="protein sequence ID" value="CCD62213.1"/>
    <property type="molecule type" value="Genomic_DNA"/>
</dbReference>
<dbReference type="EMBL" id="BX284604">
    <property type="protein sequence ID" value="CCD62214.1"/>
    <property type="molecule type" value="Genomic_DNA"/>
</dbReference>
<dbReference type="EMBL" id="M84359">
    <property type="status" value="NOT_ANNOTATED_CDS"/>
    <property type="molecule type" value="Genomic_DNA"/>
</dbReference>
<dbReference type="PIR" id="A42143">
    <property type="entry name" value="A42143"/>
</dbReference>
<dbReference type="PIR" id="F88694">
    <property type="entry name" value="F88694"/>
</dbReference>
<dbReference type="RefSeq" id="NP_001367379.1">
    <molecule id="P34707-3"/>
    <property type="nucleotide sequence ID" value="NM_001380237.1"/>
</dbReference>
<dbReference type="RefSeq" id="NP_741404.1">
    <molecule id="P34707-1"/>
    <property type="nucleotide sequence ID" value="NM_171345.6"/>
</dbReference>
<dbReference type="RefSeq" id="NP_741405.1">
    <property type="nucleotide sequence ID" value="NM_171346.3"/>
</dbReference>
<dbReference type="RefSeq" id="NP_741406.1">
    <molecule id="P34707-2"/>
    <property type="nucleotide sequence ID" value="NM_171347.7"/>
</dbReference>
<dbReference type="PDB" id="1SKN">
    <property type="method" value="X-ray"/>
    <property type="resolution" value="2.50 A"/>
    <property type="chains" value="P=540-623"/>
</dbReference>
<dbReference type="PDBsum" id="1SKN"/>
<dbReference type="SMR" id="P34707"/>
<dbReference type="BioGRID" id="42465">
    <property type="interactions" value="25"/>
</dbReference>
<dbReference type="FunCoup" id="P34707">
    <property type="interactions" value="611"/>
</dbReference>
<dbReference type="IntAct" id="P34707">
    <property type="interactions" value="5"/>
</dbReference>
<dbReference type="STRING" id="6239.T19E7.2a.1"/>
<dbReference type="BindingDB" id="P34707"/>
<dbReference type="ChEMBL" id="CHEMBL2146298"/>
<dbReference type="iPTMnet" id="P34707"/>
<dbReference type="PaxDb" id="6239-T19E7.2a"/>
<dbReference type="EnsemblMetazoa" id="T19E7.2a.1">
    <molecule id="P34707-1"/>
    <property type="protein sequence ID" value="T19E7.2a.1"/>
    <property type="gene ID" value="WBGene00004804"/>
</dbReference>
<dbReference type="EnsemblMetazoa" id="T19E7.2b.1">
    <molecule id="P34707-2"/>
    <property type="protein sequence ID" value="T19E7.2b.1"/>
    <property type="gene ID" value="WBGene00004804"/>
</dbReference>
<dbReference type="EnsemblMetazoa" id="T19E7.2c.1">
    <molecule id="P34707-3"/>
    <property type="protein sequence ID" value="T19E7.2c.1"/>
    <property type="gene ID" value="WBGene00004804"/>
</dbReference>
<dbReference type="GeneID" id="177343"/>
<dbReference type="KEGG" id="cel:CELE_T19E7.2"/>
<dbReference type="UCSC" id="T19E7.2b">
    <molecule id="P34707-1"/>
    <property type="organism name" value="c. elegans"/>
</dbReference>
<dbReference type="AGR" id="WB:WBGene00004804"/>
<dbReference type="CTD" id="177343"/>
<dbReference type="WormBase" id="T19E7.2a">
    <molecule id="P34707-1"/>
    <property type="protein sequence ID" value="CE27591"/>
    <property type="gene ID" value="WBGene00004804"/>
    <property type="gene designation" value="skn-1"/>
</dbReference>
<dbReference type="WormBase" id="T19E7.2b">
    <molecule id="P34707-2"/>
    <property type="protein sequence ID" value="CE31238"/>
    <property type="gene ID" value="WBGene00004804"/>
    <property type="gene designation" value="skn-1"/>
</dbReference>
<dbReference type="WormBase" id="T19E7.2c">
    <molecule id="P34707-3"/>
    <property type="protein sequence ID" value="CE31239"/>
    <property type="gene ID" value="WBGene00004804"/>
    <property type="gene designation" value="skn-1"/>
</dbReference>
<dbReference type="eggNOG" id="KOG3863">
    <property type="taxonomic scope" value="Eukaryota"/>
</dbReference>
<dbReference type="InParanoid" id="P34707"/>
<dbReference type="OMA" id="TERPRAH"/>
<dbReference type="OrthoDB" id="7458135at2759"/>
<dbReference type="Reactome" id="R-CEL-8951664">
    <property type="pathway name" value="Neddylation"/>
</dbReference>
<dbReference type="Reactome" id="R-CEL-9755511">
    <property type="pathway name" value="KEAP1-NFE2L2 pathway"/>
</dbReference>
<dbReference type="Reactome" id="R-CEL-9759194">
    <property type="pathway name" value="Nuclear events mediated by NFE2L2"/>
</dbReference>
<dbReference type="Reactome" id="R-CEL-9762114">
    <property type="pathway name" value="GSK3B and BTRC:CUL1-mediated-degradation of NFE2L2"/>
</dbReference>
<dbReference type="SignaLink" id="P34707"/>
<dbReference type="EvolutionaryTrace" id="P34707"/>
<dbReference type="PRO" id="PR:P34707"/>
<dbReference type="Proteomes" id="UP000001940">
    <property type="component" value="Chromosome IV"/>
</dbReference>
<dbReference type="Bgee" id="WBGene00004804">
    <property type="expression patterns" value="Expressed in pharyngeal muscle cell (C elegans) and 5 other cell types or tissues"/>
</dbReference>
<dbReference type="ExpressionAtlas" id="P34707">
    <property type="expression patterns" value="baseline and differential"/>
</dbReference>
<dbReference type="GO" id="GO:0005783">
    <property type="term" value="C:endoplasmic reticulum"/>
    <property type="evidence" value="ECO:0000314"/>
    <property type="project" value="WormBase"/>
</dbReference>
<dbReference type="GO" id="GO:0005739">
    <property type="term" value="C:mitochondrion"/>
    <property type="evidence" value="ECO:0000314"/>
    <property type="project" value="WormBase"/>
</dbReference>
<dbReference type="GO" id="GO:0005634">
    <property type="term" value="C:nucleus"/>
    <property type="evidence" value="ECO:0000314"/>
    <property type="project" value="UniProtKB"/>
</dbReference>
<dbReference type="GO" id="GO:0003700">
    <property type="term" value="F:DNA-binding transcription factor activity"/>
    <property type="evidence" value="ECO:0000303"/>
    <property type="project" value="UniProtKB"/>
</dbReference>
<dbReference type="GO" id="GO:0000981">
    <property type="term" value="F:DNA-binding transcription factor activity, RNA polymerase II-specific"/>
    <property type="evidence" value="ECO:0000318"/>
    <property type="project" value="GO_Central"/>
</dbReference>
<dbReference type="GO" id="GO:0030544">
    <property type="term" value="F:Hsp70 protein binding"/>
    <property type="evidence" value="ECO:0000353"/>
    <property type="project" value="WormBase"/>
</dbReference>
<dbReference type="GO" id="GO:0000978">
    <property type="term" value="F:RNA polymerase II cis-regulatory region sequence-specific DNA binding"/>
    <property type="evidence" value="ECO:0000314"/>
    <property type="project" value="UniProtKB"/>
</dbReference>
<dbReference type="GO" id="GO:0000977">
    <property type="term" value="F:RNA polymerase II transcription regulatory region sequence-specific DNA binding"/>
    <property type="evidence" value="ECO:0000314"/>
    <property type="project" value="WormBase"/>
</dbReference>
<dbReference type="GO" id="GO:0043565">
    <property type="term" value="F:sequence-specific DNA binding"/>
    <property type="evidence" value="ECO:0000314"/>
    <property type="project" value="WormBase"/>
</dbReference>
<dbReference type="GO" id="GO:0036500">
    <property type="term" value="P:ATF6-mediated unfolded protein response"/>
    <property type="evidence" value="ECO:0000314"/>
    <property type="project" value="WormBase"/>
</dbReference>
<dbReference type="GO" id="GO:0001708">
    <property type="term" value="P:cell fate specification"/>
    <property type="evidence" value="ECO:0000315"/>
    <property type="project" value="WormBase"/>
</dbReference>
<dbReference type="GO" id="GO:1990748">
    <property type="term" value="P:cellular detoxification"/>
    <property type="evidence" value="ECO:0000315"/>
    <property type="project" value="UniProtKB"/>
</dbReference>
<dbReference type="GO" id="GO:0042742">
    <property type="term" value="P:defense response to bacterium"/>
    <property type="evidence" value="ECO:0000315"/>
    <property type="project" value="UniProtKB"/>
</dbReference>
<dbReference type="GO" id="GO:0050829">
    <property type="term" value="P:defense response to Gram-negative bacterium"/>
    <property type="evidence" value="ECO:0000315"/>
    <property type="project" value="UniProtKB"/>
</dbReference>
<dbReference type="GO" id="GO:0008340">
    <property type="term" value="P:determination of adult lifespan"/>
    <property type="evidence" value="ECO:0000315"/>
    <property type="project" value="UniProtKB"/>
</dbReference>
<dbReference type="GO" id="GO:0048565">
    <property type="term" value="P:digestive tract development"/>
    <property type="evidence" value="ECO:0000315"/>
    <property type="project" value="UniProtKB"/>
</dbReference>
<dbReference type="GO" id="GO:0048566">
    <property type="term" value="P:embryonic digestive tract development"/>
    <property type="evidence" value="ECO:0000315"/>
    <property type="project" value="UniProtKB"/>
</dbReference>
<dbReference type="GO" id="GO:0009880">
    <property type="term" value="P:embryonic pattern specification"/>
    <property type="evidence" value="ECO:0000315"/>
    <property type="project" value="WormBase"/>
</dbReference>
<dbReference type="GO" id="GO:0001714">
    <property type="term" value="P:endodermal cell fate specification"/>
    <property type="evidence" value="ECO:0000315"/>
    <property type="project" value="UniProtKB"/>
</dbReference>
<dbReference type="GO" id="GO:0036498">
    <property type="term" value="P:IRE1-mediated unfolded protein response"/>
    <property type="evidence" value="ECO:0000270"/>
    <property type="project" value="WormBase"/>
</dbReference>
<dbReference type="GO" id="GO:0048382">
    <property type="term" value="P:mesendoderm development"/>
    <property type="evidence" value="ECO:0000315"/>
    <property type="project" value="WormBase"/>
</dbReference>
<dbReference type="GO" id="GO:1905804">
    <property type="term" value="P:positive regulation of cellular response to manganese ion"/>
    <property type="evidence" value="ECO:0000315"/>
    <property type="project" value="UniProtKB"/>
</dbReference>
<dbReference type="GO" id="GO:1900409">
    <property type="term" value="P:positive regulation of cellular response to oxidative stress"/>
    <property type="evidence" value="ECO:0000315"/>
    <property type="project" value="BHF-UCL"/>
</dbReference>
<dbReference type="GO" id="GO:0010628">
    <property type="term" value="P:positive regulation of gene expression"/>
    <property type="evidence" value="ECO:0000315"/>
    <property type="project" value="UniProtKB"/>
</dbReference>
<dbReference type="GO" id="GO:0045944">
    <property type="term" value="P:positive regulation of transcription by RNA polymerase II"/>
    <property type="evidence" value="ECO:0000315"/>
    <property type="project" value="UniProtKB"/>
</dbReference>
<dbReference type="GO" id="GO:0010468">
    <property type="term" value="P:regulation of gene expression"/>
    <property type="evidence" value="ECO:0000315"/>
    <property type="project" value="UniProtKB"/>
</dbReference>
<dbReference type="GO" id="GO:0006357">
    <property type="term" value="P:regulation of transcription by RNA polymerase II"/>
    <property type="evidence" value="ECO:0000318"/>
    <property type="project" value="GO_Central"/>
</dbReference>
<dbReference type="GO" id="GO:0006417">
    <property type="term" value="P:regulation of translation"/>
    <property type="evidence" value="ECO:0007669"/>
    <property type="project" value="UniProtKB-KW"/>
</dbReference>
<dbReference type="GO" id="GO:0009408">
    <property type="term" value="P:response to heat"/>
    <property type="evidence" value="ECO:0000270"/>
    <property type="project" value="WormBase"/>
</dbReference>
<dbReference type="GO" id="GO:0006979">
    <property type="term" value="P:response to oxidative stress"/>
    <property type="evidence" value="ECO:0000270"/>
    <property type="project" value="WormBase"/>
</dbReference>
<dbReference type="GO" id="GO:1901562">
    <property type="term" value="P:response to paraquat"/>
    <property type="evidence" value="ECO:0000316"/>
    <property type="project" value="UniProtKB"/>
</dbReference>
<dbReference type="GO" id="GO:0000303">
    <property type="term" value="P:response to superoxide"/>
    <property type="evidence" value="ECO:0000315"/>
    <property type="project" value="WormBase"/>
</dbReference>
<dbReference type="Gene3D" id="1.10.880.10">
    <property type="entry name" value="Transcription factor, Skn-1-like, DNA-binding domain"/>
    <property type="match status" value="1"/>
</dbReference>
<dbReference type="InterPro" id="IPR004827">
    <property type="entry name" value="bZIP"/>
</dbReference>
<dbReference type="InterPro" id="IPR004826">
    <property type="entry name" value="bZIP_Maf"/>
</dbReference>
<dbReference type="InterPro" id="IPR047167">
    <property type="entry name" value="NFE2-like"/>
</dbReference>
<dbReference type="InterPro" id="IPR008917">
    <property type="entry name" value="TF_DNA-bd_sf"/>
</dbReference>
<dbReference type="PANTHER" id="PTHR24411">
    <property type="entry name" value="NUCLEAR FACTOR ERYTHROID 2-RELATED FACTOR"/>
    <property type="match status" value="1"/>
</dbReference>
<dbReference type="PANTHER" id="PTHR24411:SF55">
    <property type="entry name" value="SEGMENTATION PROTEIN CAP'N'COLLAR"/>
    <property type="match status" value="1"/>
</dbReference>
<dbReference type="Pfam" id="PF03131">
    <property type="entry name" value="bZIP_Maf"/>
    <property type="match status" value="1"/>
</dbReference>
<dbReference type="SUPFAM" id="SSF47454">
    <property type="entry name" value="A DNA-binding domain in eukaryotic transcription factors"/>
    <property type="match status" value="1"/>
</dbReference>
<dbReference type="PROSITE" id="PS00036">
    <property type="entry name" value="BZIP_BASIC"/>
    <property type="match status" value="1"/>
</dbReference>
<name>SKN1_CAEEL</name>
<proteinExistence type="evidence at protein level"/>
<gene>
    <name type="primary">skn-1</name>
    <name type="ORF">T19E7.2</name>
</gene>
<accession>P34707</accession>
<accession>Q8MPW2</accession>
<accession>Q8MPW3</accession>
<protein>
    <recommendedName>
        <fullName>Protein skinhead-1</fullName>
    </recommendedName>
</protein>
<evidence type="ECO:0000250" key="1"/>
<evidence type="ECO:0000256" key="2">
    <source>
        <dbReference type="SAM" id="MobiDB-lite"/>
    </source>
</evidence>
<evidence type="ECO:0000269" key="3">
    <source>
    </source>
</evidence>
<evidence type="ECO:0000269" key="4">
    <source>
    </source>
</evidence>
<evidence type="ECO:0000269" key="5">
    <source>
    </source>
</evidence>
<evidence type="ECO:0000269" key="6">
    <source>
    </source>
</evidence>
<evidence type="ECO:0000269" key="7">
    <source>
    </source>
</evidence>
<evidence type="ECO:0000269" key="8">
    <source>
    </source>
</evidence>
<evidence type="ECO:0000269" key="9">
    <source>
    </source>
</evidence>
<evidence type="ECO:0000269" key="10">
    <source>
    </source>
</evidence>
<evidence type="ECO:0000269" key="11">
    <source>
    </source>
</evidence>
<evidence type="ECO:0000269" key="12">
    <source>
    </source>
</evidence>
<evidence type="ECO:0000269" key="13">
    <source>
    </source>
</evidence>
<evidence type="ECO:0000269" key="14">
    <source>
    </source>
</evidence>
<evidence type="ECO:0000269" key="15">
    <source>
    </source>
</evidence>
<evidence type="ECO:0000269" key="16">
    <source>
    </source>
</evidence>
<evidence type="ECO:0000269" key="17">
    <source>
    </source>
</evidence>
<evidence type="ECO:0000269" key="18">
    <source>
    </source>
</evidence>
<evidence type="ECO:0000269" key="19">
    <source>
    </source>
</evidence>
<evidence type="ECO:0000305" key="20"/>
<evidence type="ECO:0007829" key="21">
    <source>
        <dbReference type="PDB" id="1SKN"/>
    </source>
</evidence>
<reference key="1">
    <citation type="journal article" date="1998" name="Science">
        <title>Genome sequence of the nematode C. elegans: a platform for investigating biology.</title>
        <authorList>
            <consortium name="The C. elegans sequencing consortium"/>
        </authorList>
    </citation>
    <scope>NUCLEOTIDE SEQUENCE [LARGE SCALE GENOMIC DNA]</scope>
    <scope>ALTERNATIVE SPLICING</scope>
    <source>
        <strain>Bristol N2</strain>
    </source>
</reference>
<reference key="2">
    <citation type="journal article" date="1992" name="Cell">
        <title>skn-1, a maternally expressed gene required to specify the fate of ventral blastomeres in the early C. elegans embryo.</title>
        <authorList>
            <person name="Bowerman B."/>
            <person name="Eaton B.A."/>
            <person name="Priess J.R."/>
        </authorList>
    </citation>
    <scope>NUCLEOTIDE SEQUENCE [GENOMIC DNA] OF 49-623 (ISOFORM A)</scope>
    <scope>FUNCTION</scope>
    <scope>TISSUE SPECIFICITY</scope>
    <scope>DEVELOPMENTAL STAGE</scope>
    <source>
        <strain>Bristol N2</strain>
    </source>
</reference>
<reference key="3">
    <citation type="journal article" date="1994" name="Science">
        <title>Formation of a monomeric DNA binding domain by Skn-1 bZIP and homeodomain elements.</title>
        <authorList>
            <person name="Blackwell T.K."/>
            <person name="Bowerman B."/>
            <person name="Priess J.R."/>
            <person name="Weintraub H."/>
        </authorList>
    </citation>
    <scope>SUBUNIT</scope>
    <scope>SUBCELLULAR LOCATION</scope>
    <scope>DNA-BINDING</scope>
</reference>
<reference key="4">
    <citation type="journal article" date="2001" name="Mol. Cell">
        <title>Restriction of mesendoderm to a single blastomere by the combined action of SKN-1 and a GSK-3beta homolog is mediated by MED-1 and -2 in C. elegans.</title>
        <authorList>
            <person name="Maduro M.F."/>
            <person name="Meneghini M.D."/>
            <person name="Bowerman B."/>
            <person name="Broitman-Maduro G."/>
            <person name="Rothman J.H."/>
        </authorList>
    </citation>
    <scope>FUNCTION</scope>
</reference>
<reference key="5">
    <citation type="journal article" date="2005" name="Genes Dev.">
        <title>The C. elegans p38 MAPK pathway regulates nuclear localization of the transcription factor SKN-1 in oxidative stress response.</title>
        <authorList>
            <person name="Inoue H."/>
            <person name="Hisamoto N."/>
            <person name="An J.H."/>
            <person name="Oliveira R.P."/>
            <person name="Nishida E."/>
            <person name="Blackwell T.K."/>
            <person name="Matsumoto K."/>
        </authorList>
    </citation>
    <scope>SUBCELLULAR LOCATION</scope>
    <scope>PHOSPHORYLATION AT SER-164 AND SER-430</scope>
    <scope>MUTAGENESIS OF SER-164 AND SER-430</scope>
</reference>
<reference key="6">
    <citation type="journal article" date="2010" name="J. Biol. Chem.">
        <title>The ERK-MAPK pathway regulates longevity through SKN-1 and insulin-like signaling in Caenorhabditis elegans.</title>
        <authorList>
            <person name="Okuyama T."/>
            <person name="Inoue H."/>
            <person name="Ookuma S."/>
            <person name="Satoh T."/>
            <person name="Kano K."/>
            <person name="Honjoh S."/>
            <person name="Hisamoto N."/>
            <person name="Matsumoto K."/>
            <person name="Nishida E."/>
        </authorList>
    </citation>
    <scope>FUNCTION</scope>
    <scope>DISRUPTION PHENOTYPE</scope>
</reference>
<reference key="7">
    <citation type="journal article" date="2011" name="PLoS Pathog.">
        <title>Ce-Duox1/BLI-3 generated reactive oxygen species trigger protective SKN-1 activity via p38 MAPK signaling during infection in C. elegans.</title>
        <authorList>
            <person name="Hoeven R.V."/>
            <person name="McCallum K.C."/>
            <person name="Cruz M.R."/>
            <person name="Garsin D.A."/>
        </authorList>
    </citation>
    <scope>FUNCTION</scope>
    <scope>SUBCELLULAR LOCATION</scope>
    <scope>DISRUPTION PHENOTYPE</scope>
</reference>
<reference evidence="20" key="8">
    <citation type="journal article" date="2012" name="Aging Cell">
        <title>Host cell factor 1 inhibits SKN-1 to modulate oxidative stress responses in Caenorhabditis elegans.</title>
        <authorList>
            <person name="Rizki G."/>
            <person name="Picard C.L."/>
            <person name="Pereyra C."/>
            <person name="Lee S.S."/>
        </authorList>
    </citation>
    <scope>FUNCTION</scope>
    <scope>SUBCELLULAR LOCATION</scope>
    <scope>MUTAGENESIS OF 240-ARG--ILE-623</scope>
</reference>
<reference key="9">
    <citation type="journal article" date="2012" name="Cell Metab.">
        <title>Mitochondrial SKN-1/Nrf mediates a conserved starvation response.</title>
        <authorList>
            <person name="Paek J."/>
            <person name="Lo J.Y."/>
            <person name="Narasimhan S.D."/>
            <person name="Nguyen T.N."/>
            <person name="Glover-Cutter K."/>
            <person name="Robida-Stubbs S."/>
            <person name="Suzuki T."/>
            <person name="Yamamoto M."/>
            <person name="Blackwell T.K."/>
            <person name="Curran S.P."/>
        </authorList>
    </citation>
    <scope>FUNCTION</scope>
    <scope>INTERACTION WITH PGAM-5 AND MXL-3</scope>
    <scope>SUBCELLULAR LOCATION</scope>
    <scope>MUTAGENESIS OF GLU-237 AND SER-245</scope>
</reference>
<reference key="10">
    <citation type="journal article" date="2013" name="J. Neurochem.">
        <title>The metal transporter SMF-3/DMT-1 mediates aluminum-induced dopamine neuron degeneration.</title>
        <authorList>
            <person name="VanDuyn N."/>
            <person name="Settivari R."/>
            <person name="LeVora J."/>
            <person name="Zhou S."/>
            <person name="Unrine J."/>
            <person name="Nass R."/>
        </authorList>
    </citation>
    <scope>FUNCTION</scope>
    <scope>DISRUPTION PHENOTYPE</scope>
</reference>
<reference key="11">
    <citation type="journal article" date="2013" name="NeuroToxicology">
        <title>The Nrf2/SKN-1-dependent glutathione S-transferase pi homologue GST-1 inhibits dopamine neuron degeneration in a Caenorhabditis elegans model of manganism.</title>
        <authorList>
            <person name="Settivari R."/>
            <person name="VanDuyn N."/>
            <person name="LeVora J."/>
            <person name="Nass R."/>
        </authorList>
    </citation>
    <scope>FUNCTION</scope>
    <scope>DISRUPTION PHENOTYPE</scope>
</reference>
<reference key="12">
    <citation type="journal article" date="2013" name="PLoS Genet.">
        <title>Anoxia-reoxygenation regulates mitochondrial dynamics through the hypoxia response pathway, SKN-1/Nrf, and stomatin-like protein STL-1/SLP-2.</title>
        <authorList>
            <person name="Ghose P."/>
            <person name="Park E.C."/>
            <person name="Tabakin A."/>
            <person name="Salazar-Vasquez N."/>
            <person name="Rongo C."/>
        </authorList>
    </citation>
    <scope>FUNCTION</scope>
</reference>
<reference key="13">
    <citation type="journal article" date="2015" name="PLoS ONE">
        <title>Investigating the role of RIO protein kinases in Caenorhabditis elegans.</title>
        <authorList>
            <person name="Mendes T.K."/>
            <person name="Novakovic S."/>
            <person name="Raymant G."/>
            <person name="Bertram S.E."/>
            <person name="Esmaillie R."/>
            <person name="Nadarajan S."/>
            <person name="Breugelmans B."/>
            <person name="Hofmann A."/>
            <person name="Gasser R.B."/>
            <person name="Colaiacovo M.P."/>
            <person name="Boag P.R."/>
        </authorList>
    </citation>
    <scope>FUNCTION</scope>
    <scope>DISRUPTION PHENOTYPE</scope>
</reference>
<reference key="14">
    <citation type="journal article" date="2016" name="Elife">
        <title>Proteasome dysfunction triggers activation of SKN-1A/Nrf1 by the aspartic protease DDI-1.</title>
        <authorList>
            <person name="Lehrbach N.J."/>
            <person name="Ruvkun G."/>
        </authorList>
    </citation>
    <scope>FUNCTION</scope>
    <scope>SUBCELLULAR LOCATION</scope>
    <scope>PROTEOLYTIC CLEAVAGE</scope>
    <scope>DISRUPTION PHENOTYPE</scope>
</reference>
<reference key="15">
    <citation type="journal article" date="2016" name="Genetics">
        <title>TRX-1 Regulates SKN-1 Nuclear Localization Cell Non-autonomously in Caenorhabditis elegans.</title>
        <authorList>
            <person name="McCallum K.C."/>
            <person name="Liu B."/>
            <person name="Fierro-Gonzalez J.C."/>
            <person name="Swoboda P."/>
            <person name="Arur S."/>
            <person name="Miranda-Vizuete A."/>
            <person name="Garsin D.A."/>
        </authorList>
    </citation>
    <scope>SUBCELLULAR LOCATION</scope>
    <scope>TISSUE SPECIFICITY</scope>
    <scope>PHOSPHORYLATION AT SER-164 AND SER-430</scope>
    <scope>MUTAGENESIS OF SER-164 AND SER-430</scope>
</reference>
<reference key="16">
    <citation type="journal article" date="2017" name="Genetics">
        <title>The Oxidative Stress Response in Caenorhabditis elegans Requires the GATA Transcription Factor ELT-3 and SKN-1/Nrf2.</title>
        <authorList>
            <person name="Hu Q."/>
            <person name="D'Amora D.R."/>
            <person name="MacNeil L.T."/>
            <person name="Walhout A.J.M."/>
            <person name="Kubiseski T.J."/>
        </authorList>
    </citation>
    <scope>FUNCTION</scope>
    <scope>INTERACTION WITH ELT-3</scope>
    <scope>SUBCELLULAR LOCATION (ISOFORMS B AND C)</scope>
</reference>
<reference key="17">
    <citation type="journal article" date="2021" name="Cell Rep.">
        <title>Tribbles pseudokinase NIPI-3 regulates intestinal immunity in Caenorhabditis elegans by controlling SKN-1/Nrf activity.</title>
        <authorList>
            <person name="Wu C."/>
            <person name="Karakuzu O."/>
            <person name="Garsin D.A."/>
        </authorList>
    </citation>
    <scope>FUNCTION</scope>
    <scope>SUBCELLULAR LOCATION (ISOFORMS B AND C)</scope>
    <scope>MUTAGENESIS OF 553-GLN--ILE-623</scope>
</reference>
<reference key="18">
    <citation type="journal article" date="1998" name="Nat. Struct. Biol.">
        <title>A new DNA-binding motif in the Skn-1 binding domain-DNA complex.</title>
        <authorList>
            <person name="Rupert P.B."/>
            <person name="Daughdrill G.W."/>
            <person name="Bowerman B."/>
            <person name="Matthews B.W."/>
        </authorList>
    </citation>
    <scope>X-RAY CRYSTALLOGRAPHY (2.5 ANGSTROMS) OF 540-623</scope>
</reference>
<organism>
    <name type="scientific">Caenorhabditis elegans</name>
    <dbReference type="NCBI Taxonomy" id="6239"/>
    <lineage>
        <taxon>Eukaryota</taxon>
        <taxon>Metazoa</taxon>
        <taxon>Ecdysozoa</taxon>
        <taxon>Nematoda</taxon>
        <taxon>Chromadorea</taxon>
        <taxon>Rhabditida</taxon>
        <taxon>Rhabditina</taxon>
        <taxon>Rhabditomorpha</taxon>
        <taxon>Rhabditoidea</taxon>
        <taxon>Rhabditidae</taxon>
        <taxon>Peloderinae</taxon>
        <taxon>Caenorhabditis</taxon>
    </lineage>
</organism>
<feature type="chain" id="PRO_0000076639" description="Protein skinhead-1">
    <location>
        <begin position="1"/>
        <end position="623"/>
    </location>
</feature>
<feature type="region of interest" description="Disordered" evidence="2">
    <location>
        <begin position="1"/>
        <end position="29"/>
    </location>
</feature>
<feature type="region of interest" description="Disordered" evidence="2">
    <location>
        <begin position="158"/>
        <end position="184"/>
    </location>
</feature>
<feature type="region of interest" description="Disordered" evidence="2">
    <location>
        <begin position="421"/>
        <end position="451"/>
    </location>
</feature>
<feature type="region of interest" description="Disordered" evidence="2">
    <location>
        <begin position="467"/>
        <end position="557"/>
    </location>
</feature>
<feature type="region of interest" description="Basic motif" evidence="1">
    <location>
        <begin position="540"/>
        <end position="623"/>
    </location>
</feature>
<feature type="compositionally biased region" description="Polar residues" evidence="2">
    <location>
        <begin position="173"/>
        <end position="184"/>
    </location>
</feature>
<feature type="compositionally biased region" description="Low complexity" evidence="2">
    <location>
        <begin position="435"/>
        <end position="449"/>
    </location>
</feature>
<feature type="compositionally biased region" description="Low complexity" evidence="2">
    <location>
        <begin position="472"/>
        <end position="498"/>
    </location>
</feature>
<feature type="compositionally biased region" description="Low complexity" evidence="2">
    <location>
        <begin position="511"/>
        <end position="529"/>
    </location>
</feature>
<feature type="modified residue" description="Phosphoserine; by pmk-1" evidence="5 14">
    <location>
        <position position="164"/>
    </location>
</feature>
<feature type="modified residue" description="Phosphoserine; by pmk-1" evidence="5 14">
    <location>
        <position position="430"/>
    </location>
</feature>
<feature type="splice variant" id="VSP_011488" description="In isoform b." evidence="20">
    <location>
        <begin position="1"/>
        <end position="313"/>
    </location>
</feature>
<feature type="splice variant" id="VSP_011487" description="In isoform c." evidence="20">
    <location>
        <begin position="1"/>
        <end position="90"/>
    </location>
</feature>
<feature type="splice variant" id="VSP_011489" description="In isoform b." evidence="20">
    <original>FDNKQQHPVINNVSLSEGIVYNQANLTEMQEMRDSCNQVSISTIPTTSTAQPETLFNVTDSQTVEQWLPTEVVPND</original>
    <variation>MSLPSDFASSLLASSTTTNTTNTAPAAVNSFDEQEEESKKILNMYLQMFNQQQVDQHGHHHQHPYAYSGVSSTFDR</variation>
    <location>
        <begin position="314"/>
        <end position="389"/>
    </location>
</feature>
<feature type="mutagenesis site" description="Abolishes phosphorylation by pmk-1. Loss of nuclear translocation and increased susceptibility in response to arsenite treatment; when associated with A-430. Loss of nuclear translocation in a trx-1(ok1449) mutant background; when associated with A-430." evidence="5 14">
    <original>S</original>
    <variation>A</variation>
    <location>
        <position position="164"/>
    </location>
</feature>
<feature type="mutagenesis site" description="In lax188; small body size, transcriptional up-regulation of genes related to metabolism and adaptation to starvation, increased length of the reproductive period and slower growth recovery following starvation-induced arrest at the L1 larval stage." evidence="9">
    <original>E</original>
    <variation>K</variation>
    <location>
        <position position="237"/>
    </location>
</feature>
<feature type="mutagenesis site" description="In zu67; abolishes induction of gcs-1, gst-4 and gst-7 in combination with RNAi-mediated knockdown of hcf-1." evidence="8">
    <location>
        <begin position="240"/>
        <end position="623"/>
    </location>
</feature>
<feature type="mutagenesis site" description="In lax120; small body size, transcriptional up-regulation of genes related to metabolism and adaptation to starvation, increased length of the reproductive period and slower growth recovery following starvation-induced arrest at the L1 larval stage." evidence="9">
    <original>S</original>
    <variation>L</variation>
    <location>
        <position position="245"/>
    </location>
</feature>
<feature type="mutagenesis site" description="Abolishes phosphorylation by pmk-1. Loss of nuclear translocation and increased susceptibility in response to arsenite treatment; when associated with A-164. Loss of nuclear translocation in a trx-1(ok1449) mutant background; when associated with A-164." evidence="5 14">
    <original>S</original>
    <variation>A</variation>
    <location>
        <position position="430"/>
    </location>
</feature>
<feature type="mutagenesis site" description="In zu135; susceptibility to P.aeruginosa or E.faecalis is characterized by a decrease in survival rate." evidence="17">
    <location>
        <begin position="553"/>
        <end position="623"/>
    </location>
</feature>
<feature type="helix" evidence="21">
    <location>
        <begin position="550"/>
        <end position="557"/>
    </location>
</feature>
<feature type="helix" evidence="21">
    <location>
        <begin position="564"/>
        <end position="569"/>
    </location>
</feature>
<feature type="helix" evidence="21">
    <location>
        <begin position="572"/>
        <end position="581"/>
    </location>
</feature>
<feature type="helix" evidence="21">
    <location>
        <begin position="586"/>
        <end position="615"/>
    </location>
</feature>
<feature type="turn" evidence="21">
    <location>
        <begin position="616"/>
        <end position="618"/>
    </location>
</feature>